<comment type="function">
    <text evidence="1">One of the primary rRNA binding proteins, it binds directly to 16S rRNA where it nucleates assembly of the body of the 30S subunit.</text>
</comment>
<comment type="function">
    <text evidence="1">With S5 and S12 plays an important role in translational accuracy.</text>
</comment>
<comment type="subunit">
    <text evidence="1">Part of the 30S ribosomal subunit. Contacts protein S5. The interaction surface between S4 and S5 is involved in control of translational fidelity.</text>
</comment>
<comment type="similarity">
    <text evidence="1">Belongs to the universal ribosomal protein uS4 family.</text>
</comment>
<gene>
    <name evidence="1" type="primary">rpsD</name>
    <name type="ordered locus">BF4156</name>
</gene>
<accession>Q64NN4</accession>
<proteinExistence type="inferred from homology"/>
<organism>
    <name type="scientific">Bacteroides fragilis (strain YCH46)</name>
    <dbReference type="NCBI Taxonomy" id="295405"/>
    <lineage>
        <taxon>Bacteria</taxon>
        <taxon>Pseudomonadati</taxon>
        <taxon>Bacteroidota</taxon>
        <taxon>Bacteroidia</taxon>
        <taxon>Bacteroidales</taxon>
        <taxon>Bacteroidaceae</taxon>
        <taxon>Bacteroides</taxon>
    </lineage>
</organism>
<sequence length="201" mass="22580">MARYTGPKSRIARKFGEGIFGADKVLSKKNYPPGQHGNSRKRKTSEYGIQLREKQKAKYTYGVLEKQFRNLFEKAATAKGITGEVLLQMLEGRLDNIVFRLGIAPTRAAARQLVGHKHITVDGQVVNIPSYAVKPGQLIGVRERSKSLEVIANSLAGFNHSKYAWLEWDEASKVGKLLHIPERADIPENIKEHLIVELYSK</sequence>
<dbReference type="EMBL" id="AP006841">
    <property type="protein sequence ID" value="BAD50898.1"/>
    <property type="molecule type" value="Genomic_DNA"/>
</dbReference>
<dbReference type="RefSeq" id="WP_005791575.1">
    <property type="nucleotide sequence ID" value="NZ_UYXF01000007.1"/>
</dbReference>
<dbReference type="RefSeq" id="YP_101432.1">
    <property type="nucleotide sequence ID" value="NC_006347.1"/>
</dbReference>
<dbReference type="SMR" id="Q64NN4"/>
<dbReference type="STRING" id="295405.BF4156"/>
<dbReference type="GeneID" id="60368954"/>
<dbReference type="KEGG" id="bfr:BF4156"/>
<dbReference type="PATRIC" id="fig|295405.11.peg.4009"/>
<dbReference type="HOGENOM" id="CLU_092403_0_2_10"/>
<dbReference type="OrthoDB" id="9803672at2"/>
<dbReference type="Proteomes" id="UP000002197">
    <property type="component" value="Chromosome"/>
</dbReference>
<dbReference type="GO" id="GO:0015935">
    <property type="term" value="C:small ribosomal subunit"/>
    <property type="evidence" value="ECO:0007669"/>
    <property type="project" value="InterPro"/>
</dbReference>
<dbReference type="GO" id="GO:0019843">
    <property type="term" value="F:rRNA binding"/>
    <property type="evidence" value="ECO:0007669"/>
    <property type="project" value="UniProtKB-UniRule"/>
</dbReference>
<dbReference type="GO" id="GO:0003735">
    <property type="term" value="F:structural constituent of ribosome"/>
    <property type="evidence" value="ECO:0007669"/>
    <property type="project" value="InterPro"/>
</dbReference>
<dbReference type="GO" id="GO:0042274">
    <property type="term" value="P:ribosomal small subunit biogenesis"/>
    <property type="evidence" value="ECO:0007669"/>
    <property type="project" value="TreeGrafter"/>
</dbReference>
<dbReference type="GO" id="GO:0006412">
    <property type="term" value="P:translation"/>
    <property type="evidence" value="ECO:0007669"/>
    <property type="project" value="UniProtKB-UniRule"/>
</dbReference>
<dbReference type="CDD" id="cd00165">
    <property type="entry name" value="S4"/>
    <property type="match status" value="1"/>
</dbReference>
<dbReference type="FunFam" id="1.10.1050.10:FF:000001">
    <property type="entry name" value="30S ribosomal protein S4"/>
    <property type="match status" value="1"/>
</dbReference>
<dbReference type="FunFam" id="3.10.290.10:FF:000001">
    <property type="entry name" value="30S ribosomal protein S4"/>
    <property type="match status" value="1"/>
</dbReference>
<dbReference type="Gene3D" id="1.10.1050.10">
    <property type="entry name" value="Ribosomal Protein S4 Delta 41, Chain A, domain 1"/>
    <property type="match status" value="1"/>
</dbReference>
<dbReference type="Gene3D" id="3.10.290.10">
    <property type="entry name" value="RNA-binding S4 domain"/>
    <property type="match status" value="1"/>
</dbReference>
<dbReference type="HAMAP" id="MF_01306_B">
    <property type="entry name" value="Ribosomal_uS4_B"/>
    <property type="match status" value="1"/>
</dbReference>
<dbReference type="InterPro" id="IPR022801">
    <property type="entry name" value="Ribosomal_uS4"/>
</dbReference>
<dbReference type="InterPro" id="IPR005709">
    <property type="entry name" value="Ribosomal_uS4_bac-type"/>
</dbReference>
<dbReference type="InterPro" id="IPR018079">
    <property type="entry name" value="Ribosomal_uS4_CS"/>
</dbReference>
<dbReference type="InterPro" id="IPR001912">
    <property type="entry name" value="Ribosomal_uS4_N"/>
</dbReference>
<dbReference type="InterPro" id="IPR002942">
    <property type="entry name" value="S4_RNA-bd"/>
</dbReference>
<dbReference type="InterPro" id="IPR036986">
    <property type="entry name" value="S4_RNA-bd_sf"/>
</dbReference>
<dbReference type="NCBIfam" id="NF003717">
    <property type="entry name" value="PRK05327.1"/>
    <property type="match status" value="1"/>
</dbReference>
<dbReference type="NCBIfam" id="TIGR01017">
    <property type="entry name" value="rpsD_bact"/>
    <property type="match status" value="1"/>
</dbReference>
<dbReference type="PANTHER" id="PTHR11831">
    <property type="entry name" value="30S 40S RIBOSOMAL PROTEIN"/>
    <property type="match status" value="1"/>
</dbReference>
<dbReference type="PANTHER" id="PTHR11831:SF4">
    <property type="entry name" value="SMALL RIBOSOMAL SUBUNIT PROTEIN US4M"/>
    <property type="match status" value="1"/>
</dbReference>
<dbReference type="Pfam" id="PF00163">
    <property type="entry name" value="Ribosomal_S4"/>
    <property type="match status" value="1"/>
</dbReference>
<dbReference type="Pfam" id="PF01479">
    <property type="entry name" value="S4"/>
    <property type="match status" value="1"/>
</dbReference>
<dbReference type="SMART" id="SM01390">
    <property type="entry name" value="Ribosomal_S4"/>
    <property type="match status" value="1"/>
</dbReference>
<dbReference type="SMART" id="SM00363">
    <property type="entry name" value="S4"/>
    <property type="match status" value="1"/>
</dbReference>
<dbReference type="SUPFAM" id="SSF55174">
    <property type="entry name" value="Alpha-L RNA-binding motif"/>
    <property type="match status" value="1"/>
</dbReference>
<dbReference type="PROSITE" id="PS00632">
    <property type="entry name" value="RIBOSOMAL_S4"/>
    <property type="match status" value="1"/>
</dbReference>
<dbReference type="PROSITE" id="PS50889">
    <property type="entry name" value="S4"/>
    <property type="match status" value="1"/>
</dbReference>
<protein>
    <recommendedName>
        <fullName evidence="1">Small ribosomal subunit protein uS4</fullName>
    </recommendedName>
    <alternativeName>
        <fullName evidence="3">30S ribosomal protein S4</fullName>
    </alternativeName>
</protein>
<feature type="chain" id="PRO_0000132334" description="Small ribosomal subunit protein uS4">
    <location>
        <begin position="1"/>
        <end position="201"/>
    </location>
</feature>
<feature type="domain" description="S4 RNA-binding" evidence="1">
    <location>
        <begin position="92"/>
        <end position="155"/>
    </location>
</feature>
<feature type="region of interest" description="Disordered" evidence="2">
    <location>
        <begin position="28"/>
        <end position="47"/>
    </location>
</feature>
<name>RS4_BACFR</name>
<keyword id="KW-0687">Ribonucleoprotein</keyword>
<keyword id="KW-0689">Ribosomal protein</keyword>
<keyword id="KW-0694">RNA-binding</keyword>
<keyword id="KW-0699">rRNA-binding</keyword>
<reference key="1">
    <citation type="journal article" date="2004" name="Proc. Natl. Acad. Sci. U.S.A.">
        <title>Genomic analysis of Bacteroides fragilis reveals extensive DNA inversions regulating cell surface adaptation.</title>
        <authorList>
            <person name="Kuwahara T."/>
            <person name="Yamashita A."/>
            <person name="Hirakawa H."/>
            <person name="Nakayama H."/>
            <person name="Toh H."/>
            <person name="Okada N."/>
            <person name="Kuhara S."/>
            <person name="Hattori M."/>
            <person name="Hayashi T."/>
            <person name="Ohnishi Y."/>
        </authorList>
    </citation>
    <scope>NUCLEOTIDE SEQUENCE [LARGE SCALE GENOMIC DNA]</scope>
    <source>
        <strain>YCH46</strain>
    </source>
</reference>
<evidence type="ECO:0000255" key="1">
    <source>
        <dbReference type="HAMAP-Rule" id="MF_01306"/>
    </source>
</evidence>
<evidence type="ECO:0000256" key="2">
    <source>
        <dbReference type="SAM" id="MobiDB-lite"/>
    </source>
</evidence>
<evidence type="ECO:0000305" key="3"/>